<evidence type="ECO:0000250" key="1">
    <source>
        <dbReference type="UniProtKB" id="D3ZFB6"/>
    </source>
</evidence>
<evidence type="ECO:0000250" key="2">
    <source>
        <dbReference type="UniProtKB" id="E9PUL5"/>
    </source>
</evidence>
<evidence type="ECO:0000250" key="3">
    <source>
        <dbReference type="UniProtKB" id="Q7Z6L0"/>
    </source>
</evidence>
<evidence type="ECO:0000255" key="4"/>
<evidence type="ECO:0000256" key="5">
    <source>
        <dbReference type="SAM" id="MobiDB-lite"/>
    </source>
</evidence>
<evidence type="ECO:0000305" key="6"/>
<gene>
    <name type="primary">PRRT2</name>
</gene>
<keyword id="KW-1003">Cell membrane</keyword>
<keyword id="KW-0966">Cell projection</keyword>
<keyword id="KW-0968">Cytoplasmic vesicle</keyword>
<keyword id="KW-0472">Membrane</keyword>
<keyword id="KW-0488">Methylation</keyword>
<keyword id="KW-0597">Phosphoprotein</keyword>
<keyword id="KW-0628">Postsynaptic cell membrane</keyword>
<keyword id="KW-1185">Reference proteome</keyword>
<keyword id="KW-0770">Synapse</keyword>
<keyword id="KW-0812">Transmembrane</keyword>
<keyword id="KW-1133">Transmembrane helix</keyword>
<protein>
    <recommendedName>
        <fullName>Proline-rich transmembrane protein 2</fullName>
    </recommendedName>
    <alternativeName>
        <fullName>Dispanin subfamily B member 3</fullName>
        <shortName>DSPB3</shortName>
    </alternativeName>
</protein>
<name>PRRT2_PONAB</name>
<organism>
    <name type="scientific">Pongo abelii</name>
    <name type="common">Sumatran orangutan</name>
    <name type="synonym">Pongo pygmaeus abelii</name>
    <dbReference type="NCBI Taxonomy" id="9601"/>
    <lineage>
        <taxon>Eukaryota</taxon>
        <taxon>Metazoa</taxon>
        <taxon>Chordata</taxon>
        <taxon>Craniata</taxon>
        <taxon>Vertebrata</taxon>
        <taxon>Euteleostomi</taxon>
        <taxon>Mammalia</taxon>
        <taxon>Eutheria</taxon>
        <taxon>Euarchontoglires</taxon>
        <taxon>Primates</taxon>
        <taxon>Haplorrhini</taxon>
        <taxon>Catarrhini</taxon>
        <taxon>Hominidae</taxon>
        <taxon>Pongo</taxon>
    </lineage>
</organism>
<sequence>MAASSSEISEMKGVEESPEVPGEGPGHSEAETGPPQVLAGVPDQPEALQPGPDTTAALVDSGPKAELAPETTETPAGASETAQATDLSLSPGGESKANCSPEDLCQETVSKPEVSKETTADQGSRLESAAPPEPAPEPAPQPDPQPDSQPTPKPALQPELPTQEDPTPEILSESVGEKQENGAVVPLQAGDGEEGPAPEPHSPPSKKSPPANGAPPRVLQQLVEEDRMGRAHSGHPGSPRGSLSRHPSSQLAGPGVEGGEGTQKPRDYIILAILSCFCPMWPVNIVAFAYAVMSRNSLQQGDVDGAQRLGRVAKLLSIVALVGGVLIIIASCVINLGVYK</sequence>
<accession>Q5RAC1</accession>
<proteinExistence type="evidence at transcript level"/>
<reference key="1">
    <citation type="submission" date="2004-11" db="EMBL/GenBank/DDBJ databases">
        <authorList>
            <consortium name="The German cDNA consortium"/>
        </authorList>
    </citation>
    <scope>NUCLEOTIDE SEQUENCE [LARGE SCALE MRNA]</scope>
    <source>
        <tissue>Brain cortex</tissue>
    </source>
</reference>
<reference key="2">
    <citation type="journal article" date="2012" name="PLoS ONE">
        <title>The dispanins: a novel gene family of ancient origin that contains 14 human members.</title>
        <authorList>
            <person name="Sallman Almen M."/>
            <person name="Bringeland N."/>
            <person name="Fredriksson R."/>
            <person name="Schioth H.B."/>
        </authorList>
    </citation>
    <scope>GENE FAMILY</scope>
</reference>
<dbReference type="EMBL" id="CR859097">
    <property type="protein sequence ID" value="CAH91289.1"/>
    <property type="molecule type" value="mRNA"/>
</dbReference>
<dbReference type="RefSeq" id="NP_001125763.1">
    <property type="nucleotide sequence ID" value="NM_001132291.1"/>
</dbReference>
<dbReference type="FunCoup" id="Q5RAC1">
    <property type="interactions" value="182"/>
</dbReference>
<dbReference type="STRING" id="9601.ENSPPYP00000008205"/>
<dbReference type="GeneID" id="100444066"/>
<dbReference type="KEGG" id="pon:100444066"/>
<dbReference type="CTD" id="112476"/>
<dbReference type="eggNOG" id="ENOG502S2U1">
    <property type="taxonomic scope" value="Eukaryota"/>
</dbReference>
<dbReference type="InParanoid" id="Q5RAC1"/>
<dbReference type="OrthoDB" id="9665078at2759"/>
<dbReference type="Proteomes" id="UP000001595">
    <property type="component" value="Unplaced"/>
</dbReference>
<dbReference type="GO" id="GO:0043679">
    <property type="term" value="C:axon terminus"/>
    <property type="evidence" value="ECO:0000250"/>
    <property type="project" value="UniProtKB"/>
</dbReference>
<dbReference type="GO" id="GO:0043197">
    <property type="term" value="C:dendritic spine"/>
    <property type="evidence" value="ECO:0007669"/>
    <property type="project" value="UniProtKB-SubCell"/>
</dbReference>
<dbReference type="GO" id="GO:0098839">
    <property type="term" value="C:postsynaptic density membrane"/>
    <property type="evidence" value="ECO:0007669"/>
    <property type="project" value="UniProtKB-SubCell"/>
</dbReference>
<dbReference type="GO" id="GO:0098793">
    <property type="term" value="C:presynapse"/>
    <property type="evidence" value="ECO:0000250"/>
    <property type="project" value="UniProtKB"/>
</dbReference>
<dbReference type="GO" id="GO:0042734">
    <property type="term" value="C:presynaptic membrane"/>
    <property type="evidence" value="ECO:0000250"/>
    <property type="project" value="UniProtKB"/>
</dbReference>
<dbReference type="GO" id="GO:0008021">
    <property type="term" value="C:synaptic vesicle"/>
    <property type="evidence" value="ECO:0000250"/>
    <property type="project" value="UniProtKB"/>
</dbReference>
<dbReference type="GO" id="GO:0030672">
    <property type="term" value="C:synaptic vesicle membrane"/>
    <property type="evidence" value="ECO:0007669"/>
    <property type="project" value="UniProtKB-SubCell"/>
</dbReference>
<dbReference type="GO" id="GO:0031982">
    <property type="term" value="C:vesicle"/>
    <property type="evidence" value="ECO:0000250"/>
    <property type="project" value="UniProtKB"/>
</dbReference>
<dbReference type="GO" id="GO:0017075">
    <property type="term" value="F:syntaxin-1 binding"/>
    <property type="evidence" value="ECO:0000250"/>
    <property type="project" value="UniProtKB"/>
</dbReference>
<dbReference type="GO" id="GO:1905513">
    <property type="term" value="P:negative regulation of short-term synaptic potentiation"/>
    <property type="evidence" value="ECO:0000250"/>
    <property type="project" value="UniProtKB"/>
</dbReference>
<dbReference type="GO" id="GO:0035544">
    <property type="term" value="P:negative regulation of SNARE complex assembly"/>
    <property type="evidence" value="ECO:0000250"/>
    <property type="project" value="UniProtKB"/>
</dbReference>
<dbReference type="GO" id="GO:0031629">
    <property type="term" value="P:synaptic vesicle fusion to presynaptic active zone membrane"/>
    <property type="evidence" value="ECO:0000250"/>
    <property type="project" value="UniProtKB"/>
</dbReference>
<dbReference type="InterPro" id="IPR051423">
    <property type="entry name" value="CD225/Dispanin"/>
</dbReference>
<dbReference type="InterPro" id="IPR007593">
    <property type="entry name" value="CD225/Dispanin_fam"/>
</dbReference>
<dbReference type="PANTHER" id="PTHR14948">
    <property type="entry name" value="NG5"/>
    <property type="match status" value="1"/>
</dbReference>
<dbReference type="PANTHER" id="PTHR14948:SF20">
    <property type="entry name" value="PROLINE-RICH TRANSMEMBRANE PROTEIN 2"/>
    <property type="match status" value="1"/>
</dbReference>
<dbReference type="Pfam" id="PF04505">
    <property type="entry name" value="CD225"/>
    <property type="match status" value="1"/>
</dbReference>
<comment type="function">
    <text evidence="2">As a component of the outer core of AMPAR complex, may be involved in synaptic transmission in the central nervous system. In hippocampal neurons, in presynaptic terminals, plays an important role in the final steps of neurotransmitter release, possibly by regulating Ca(2+)-sensing. In the cerebellum, may inhibit SNARE complex formation and down-regulate short-term facilitation.</text>
</comment>
<comment type="subunit">
    <text evidence="2 3">Component of the outer core of AMPAR complex (By similarity). AMPAR complex consists of an inner core made of 4 pore-forming GluA/GRIA proteins (GRIA1, GRIA2, GRIA3 and GRIA4) and 4 major auxiliary subunits arranged in a twofold symmetry. One of the two pairs of distinct binding sites is occupied either by CNIH2, CNIH3 or CACNG2, CACNG3. The other harbors CACNG2, CACNG3, CACNG4, CACNG8 or GSG1L. This inner core of AMPAR complex is complemented by outer core constituents binding directly to the GluA/GRIA proteins at sites distinct from the interaction sites of the inner core constituents. Outer core constituents include at least PRRT1, PRRT2, CKAMP44/SHISA9, FRRS1L and NRN1. The proteins of the inner and outer core serve as a platform for other, more peripherally associated AMPAR constituents. Alone or in combination, these auxiliary subunits control the gating and pharmacology of the AMPAR complex and profoundly impact their biogenesis and protein processing (By similarity). Interacts with intersectin 1/ITSN1. Interacts with SNARE complex components, including SNAP25, STX1A, SYT1 and SYT2; this interaction may inhibit SNARE complex formation (By similarity).</text>
</comment>
<comment type="subcellular location">
    <subcellularLocation>
        <location evidence="3">Cell membrane</location>
        <topology evidence="2">Single-pass membrane protein</topology>
    </subcellularLocation>
    <subcellularLocation>
        <location evidence="2">Presynaptic cell membrane</location>
        <topology evidence="2">Single-pass membrane protein</topology>
    </subcellularLocation>
    <subcellularLocation>
        <location evidence="2">Synapse</location>
    </subcellularLocation>
    <subcellularLocation>
        <location evidence="3">Cell projection</location>
        <location evidence="3">Axon</location>
    </subcellularLocation>
    <subcellularLocation>
        <location evidence="1">Cytoplasmic vesicle</location>
        <location evidence="1">Secretory vesicle</location>
        <location evidence="1">Synaptic vesicle membrane</location>
    </subcellularLocation>
    <subcellularLocation>
        <location evidence="1">Postsynaptic density membrane</location>
    </subcellularLocation>
    <subcellularLocation>
        <location evidence="1">Cell projection</location>
        <location evidence="1">Dendritic spine</location>
    </subcellularLocation>
</comment>
<comment type="similarity">
    <text evidence="6">Belongs to the CD225/Dispanin family.</text>
</comment>
<feature type="chain" id="PRO_0000307746" description="Proline-rich transmembrane protein 2">
    <location>
        <begin position="1"/>
        <end position="340"/>
    </location>
</feature>
<feature type="topological domain" description="Cytoplasmic" evidence="2 4">
    <location>
        <begin position="1"/>
        <end position="268"/>
    </location>
</feature>
<feature type="intramembrane region" description="Helical" evidence="2 4">
    <location>
        <begin position="269"/>
        <end position="289"/>
    </location>
</feature>
<feature type="topological domain" description="Cytoplasmic" evidence="2 4">
    <location>
        <begin position="290"/>
        <end position="317"/>
    </location>
</feature>
<feature type="transmembrane region" description="Helical" evidence="2 4">
    <location>
        <begin position="318"/>
        <end position="338"/>
    </location>
</feature>
<feature type="topological domain" description="Extracellular" evidence="2 4">
    <location>
        <begin position="339"/>
        <end position="340"/>
    </location>
</feature>
<feature type="region of interest" description="Disordered" evidence="5">
    <location>
        <begin position="1"/>
        <end position="261"/>
    </location>
</feature>
<feature type="compositionally biased region" description="Pro residues" evidence="5">
    <location>
        <begin position="131"/>
        <end position="155"/>
    </location>
</feature>
<feature type="compositionally biased region" description="Pro residues" evidence="5">
    <location>
        <begin position="197"/>
        <end position="207"/>
    </location>
</feature>
<feature type="modified residue" description="Phosphoserine" evidence="2">
    <location>
        <position position="28"/>
    </location>
</feature>
<feature type="modified residue" description="Phosphothreonine" evidence="2">
    <location>
        <position position="74"/>
    </location>
</feature>
<feature type="modified residue" description="Phosphoserine" evidence="1">
    <location>
        <position position="238"/>
    </location>
</feature>
<feature type="modified residue" description="Omega-N-methylarginine" evidence="2">
    <location>
        <position position="240"/>
    </location>
</feature>
<feature type="modified residue" description="Phosphoserine" evidence="2">
    <location>
        <position position="248"/>
    </location>
</feature>
<feature type="modified residue" description="Phosphoserine" evidence="2">
    <location>
        <position position="249"/>
    </location>
</feature>